<keyword id="KW-0002">3D-structure</keyword>
<keyword id="KW-0025">Alternative splicing</keyword>
<keyword id="KW-0130">Cell adhesion</keyword>
<keyword id="KW-1003">Cell membrane</keyword>
<keyword id="KW-1015">Disulfide bond</keyword>
<keyword id="KW-0325">Glycoprotein</keyword>
<keyword id="KW-0393">Immunoglobulin domain</keyword>
<keyword id="KW-1017">Isopeptide bond</keyword>
<keyword id="KW-0430">Lectin</keyword>
<keyword id="KW-0472">Membrane</keyword>
<keyword id="KW-0597">Phosphoprotein</keyword>
<keyword id="KW-1267">Proteomics identification</keyword>
<keyword id="KW-1185">Reference proteome</keyword>
<keyword id="KW-0677">Repeat</keyword>
<keyword id="KW-0732">Signal</keyword>
<keyword id="KW-0812">Transmembrane</keyword>
<keyword id="KW-1133">Transmembrane helix</keyword>
<gene>
    <name evidence="15 18" type="primary">CD22</name>
    <name type="synonym">SIGLEC2</name>
</gene>
<feature type="signal peptide" evidence="3">
    <location>
        <begin position="1"/>
        <end position="19"/>
    </location>
</feature>
<feature type="chain" id="PRO_0000014873" description="B-cell receptor CD22">
    <location>
        <begin position="20"/>
        <end position="847"/>
    </location>
</feature>
<feature type="topological domain" description="Extracellular" evidence="3">
    <location>
        <begin position="20"/>
        <end position="687"/>
    </location>
</feature>
<feature type="transmembrane region" description="Helical" evidence="3">
    <location>
        <begin position="688"/>
        <end position="706"/>
    </location>
</feature>
<feature type="topological domain" description="Cytoplasmic" evidence="3">
    <location>
        <begin position="707"/>
        <end position="847"/>
    </location>
</feature>
<feature type="domain" description="Ig-like V-type">
    <location>
        <begin position="20"/>
        <end position="138"/>
    </location>
</feature>
<feature type="domain" description="Ig-like C2-type 1">
    <location>
        <begin position="143"/>
        <end position="235"/>
    </location>
</feature>
<feature type="domain" description="Ig-like C2-type 2">
    <location>
        <begin position="242"/>
        <end position="326"/>
    </location>
</feature>
<feature type="domain" description="Ig-like C2-type 3">
    <location>
        <begin position="331"/>
        <end position="416"/>
    </location>
</feature>
<feature type="domain" description="Ig-like C2-type 4">
    <location>
        <begin position="419"/>
        <end position="500"/>
    </location>
</feature>
<feature type="domain" description="Ig-like C2-type 5">
    <location>
        <begin position="505"/>
        <end position="582"/>
    </location>
</feature>
<feature type="domain" description="Ig-like C2-type 6">
    <location>
        <begin position="593"/>
        <end position="676"/>
    </location>
</feature>
<feature type="short sequence motif" description="ITIM motif 1">
    <location>
        <begin position="760"/>
        <end position="765"/>
    </location>
</feature>
<feature type="short sequence motif" description="ITIM motif 2">
    <location>
        <begin position="794"/>
        <end position="799"/>
    </location>
</feature>
<feature type="short sequence motif" description="ITIM motif 3">
    <location>
        <begin position="820"/>
        <end position="825"/>
    </location>
</feature>
<feature type="short sequence motif" description="ITIM motif 4">
    <location>
        <begin position="840"/>
        <end position="845"/>
    </location>
</feature>
<feature type="binding site" evidence="1">
    <location>
        <position position="120"/>
    </location>
    <ligand>
        <name>N-acetylneuraminate</name>
        <dbReference type="ChEBI" id="CHEBI:35418"/>
    </ligand>
</feature>
<feature type="modified residue" description="Phosphoserine" evidence="2">
    <location>
        <position position="725"/>
    </location>
</feature>
<feature type="modified residue" description="Phosphoserine" evidence="2">
    <location>
        <position position="726"/>
    </location>
</feature>
<feature type="modified residue" description="Phosphoserine" evidence="2">
    <location>
        <position position="729"/>
    </location>
</feature>
<feature type="modified residue" description="Phosphotyrosine" evidence="2">
    <location>
        <position position="762"/>
    </location>
</feature>
<feature type="modified residue" description="Phosphotyrosine" evidence="2">
    <location>
        <position position="807"/>
    </location>
</feature>
<feature type="modified residue" description="Phosphotyrosine" evidence="2">
    <location>
        <position position="822"/>
    </location>
</feature>
<feature type="modified residue" description="Phosphotyrosine" evidence="2">
    <location>
        <position position="842"/>
    </location>
</feature>
<feature type="glycosylation site" description="N-linked (GlcNAc...) asparagine" evidence="3">
    <location>
        <position position="67"/>
    </location>
</feature>
<feature type="glycosylation site" description="N-linked (GlcNAc...) asparagine" evidence="3">
    <location>
        <position position="101"/>
    </location>
</feature>
<feature type="glycosylation site" description="N-linked (GlcNAc...) asparagine" evidence="3">
    <location>
        <position position="112"/>
    </location>
</feature>
<feature type="glycosylation site" description="N-linked (GlcNAc...) asparagine" evidence="3">
    <location>
        <position position="135"/>
    </location>
</feature>
<feature type="glycosylation site" description="N-linked (GlcNAc...) asparagine" evidence="3">
    <location>
        <position position="164"/>
    </location>
</feature>
<feature type="glycosylation site" description="N-linked (GlcNAc...) asparagine" evidence="3">
    <location>
        <position position="231"/>
    </location>
</feature>
<feature type="glycosylation site" description="N-linked (GlcNAc...) asparagine" evidence="3">
    <location>
        <position position="363"/>
    </location>
</feature>
<feature type="glycosylation site" description="N-linked (GlcNAc...) asparagine" evidence="3">
    <location>
        <position position="445"/>
    </location>
</feature>
<feature type="glycosylation site" description="N-linked (GlcNAc...) asparagine" evidence="3">
    <location>
        <position position="479"/>
    </location>
</feature>
<feature type="glycosylation site" description="N-linked (GlcNAc...) asparagine" evidence="3">
    <location>
        <position position="574"/>
    </location>
</feature>
<feature type="glycosylation site" description="N-linked (GlcNAc...) asparagine" evidence="9 19">
    <location>
        <position position="634"/>
    </location>
</feature>
<feature type="disulfide bond" evidence="4">
    <location>
        <begin position="39"/>
        <end position="167"/>
    </location>
</feature>
<feature type="disulfide bond" evidence="4">
    <location>
        <begin position="44"/>
        <end position="102"/>
    </location>
</feature>
<feature type="disulfide bond" evidence="4">
    <location>
        <begin position="161"/>
        <end position="219"/>
    </location>
</feature>
<feature type="disulfide bond" evidence="4">
    <location>
        <begin position="265"/>
        <end position="309"/>
    </location>
</feature>
<feature type="disulfide bond" evidence="4">
    <location>
        <begin position="353"/>
        <end position="396"/>
    </location>
</feature>
<feature type="disulfide bond" evidence="4">
    <location>
        <begin position="442"/>
        <end position="484"/>
    </location>
</feature>
<feature type="disulfide bond" evidence="4">
    <location>
        <begin position="529"/>
        <end position="571"/>
    </location>
</feature>
<feature type="disulfide bond" evidence="4">
    <location>
        <begin position="616"/>
        <end position="659"/>
    </location>
</feature>
<feature type="splice variant" id="VSP_054619" description="In isoform 5." evidence="14">
    <original>MHL</original>
    <variation>MSL</variation>
    <location>
        <begin position="1"/>
        <end position="3"/>
    </location>
</feature>
<feature type="splice variant" id="VSP_054620" description="In isoform 5." evidence="14">
    <location>
        <begin position="4"/>
        <end position="175"/>
    </location>
</feature>
<feature type="splice variant" id="VSP_002531" description="In isoform CD22-alpha." evidence="17">
    <location>
        <begin position="241"/>
        <end position="417"/>
    </location>
</feature>
<feature type="splice variant" id="VSP_045363" description="In isoform 3." evidence="16">
    <location>
        <begin position="330"/>
        <end position="417"/>
    </location>
</feature>
<feature type="splice variant" id="VSP_047223" description="In isoform 4." evidence="17">
    <original>VRRAPLSEGPHSLGC</original>
    <variation>RCRVLRDAETSPGLR</variation>
    <location>
        <begin position="737"/>
        <end position="751"/>
    </location>
</feature>
<feature type="splice variant" id="VSP_047224" description="In isoform 4." evidence="17">
    <location>
        <begin position="752"/>
        <end position="847"/>
    </location>
</feature>
<feature type="sequence variant" id="VAR_014133" description="In dbSNP:rs201453271." evidence="5">
    <original>A</original>
    <variation>T</variation>
    <location>
        <position position="34"/>
    </location>
</feature>
<feature type="sequence variant" id="VAR_003913" description="Observed with a marginally higher frequency in patients with systemic lupus erythematosus; dbSNP:rs554866571." evidence="5">
    <original>Q</original>
    <variation>E</variation>
    <location>
        <position position="152"/>
    </location>
</feature>
<feature type="sequence variant" id="VAR_014134" description="In dbSNP:rs752024645." evidence="5">
    <original>E</original>
    <variation>K</variation>
    <location>
        <position position="203"/>
    </location>
</feature>
<feature type="sequence variant" id="VAR_049903" description="In dbSNP:rs35715143.">
    <original>G</original>
    <variation>R</variation>
    <location>
        <position position="551"/>
    </location>
</feature>
<feature type="sequence variant" id="VAR_014135" description="In dbSNP:rs1058407." evidence="6">
    <original>Y</original>
    <variation>H</variation>
    <location>
        <position position="639"/>
    </location>
</feature>
<feature type="sequence variant" id="VAR_003914" description="In dbSNP:rs17719289." evidence="5">
    <original>S</original>
    <variation>G</variation>
    <location>
        <position position="664"/>
    </location>
</feature>
<feature type="sequence variant" id="VAR_003915" description="In dbSNP:rs749980313." evidence="5">
    <original>R</original>
    <variation>C</variation>
    <location>
        <position position="669"/>
    </location>
</feature>
<feature type="sequence variant" id="VAR_003916" description="In dbSNP:rs10406069." evidence="5">
    <original>G</original>
    <variation>D</variation>
    <location>
        <position position="745"/>
    </location>
</feature>
<feature type="sequence conflict" description="In Ref. 1; CAA42006." evidence="17" ref="1">
    <original>A</original>
    <variation>R</variation>
    <location>
        <position position="486"/>
    </location>
</feature>
<feature type="sequence conflict" description="In Ref. 1; CAA42006." evidence="17" ref="1">
    <original>PD</original>
    <variation>RT</variation>
    <location>
        <begin position="788"/>
        <end position="789"/>
    </location>
</feature>
<feature type="helix" evidence="20">
    <location>
        <begin position="21"/>
        <end position="23"/>
    </location>
</feature>
<feature type="strand" evidence="20">
    <location>
        <begin position="24"/>
        <end position="28"/>
    </location>
</feature>
<feature type="strand" evidence="20">
    <location>
        <begin position="30"/>
        <end position="35"/>
    </location>
</feature>
<feature type="strand" evidence="20">
    <location>
        <begin position="40"/>
        <end position="42"/>
    </location>
</feature>
<feature type="strand" evidence="20">
    <location>
        <begin position="45"/>
        <end position="48"/>
    </location>
</feature>
<feature type="strand" evidence="20">
    <location>
        <begin position="54"/>
        <end position="65"/>
    </location>
</feature>
<feature type="turn" evidence="20">
    <location>
        <begin position="66"/>
        <end position="69"/>
    </location>
</feature>
<feature type="strand" evidence="20">
    <location>
        <begin position="70"/>
        <end position="78"/>
    </location>
</feature>
<feature type="turn" evidence="20">
    <location>
        <begin position="79"/>
        <end position="81"/>
    </location>
</feature>
<feature type="helix" evidence="20">
    <location>
        <begin position="82"/>
        <end position="84"/>
    </location>
</feature>
<feature type="helix" evidence="22">
    <location>
        <begin position="87"/>
        <end position="89"/>
    </location>
</feature>
<feature type="strand" evidence="20">
    <location>
        <begin position="91"/>
        <end position="94"/>
    </location>
</feature>
<feature type="strand" evidence="20">
    <location>
        <begin position="98"/>
        <end position="101"/>
    </location>
</feature>
<feature type="strand" evidence="20">
    <location>
        <begin position="104"/>
        <end position="108"/>
    </location>
</feature>
<feature type="helix" evidence="20">
    <location>
        <begin position="111"/>
        <end position="113"/>
    </location>
</feature>
<feature type="strand" evidence="20">
    <location>
        <begin position="115"/>
        <end position="122"/>
    </location>
</feature>
<feature type="strand" evidence="20">
    <location>
        <begin position="127"/>
        <end position="139"/>
    </location>
</feature>
<feature type="strand" evidence="20">
    <location>
        <begin position="144"/>
        <end position="146"/>
    </location>
</feature>
<feature type="strand" evidence="20">
    <location>
        <begin position="157"/>
        <end position="164"/>
    </location>
</feature>
<feature type="strand" evidence="20">
    <location>
        <begin position="172"/>
        <end position="178"/>
    </location>
</feature>
<feature type="strand" evidence="20">
    <location>
        <begin position="187"/>
        <end position="196"/>
    </location>
</feature>
<feature type="strand" evidence="20">
    <location>
        <begin position="198"/>
        <end position="206"/>
    </location>
</feature>
<feature type="helix" evidence="20">
    <location>
        <begin position="210"/>
        <end position="212"/>
    </location>
</feature>
<feature type="strand" evidence="20">
    <location>
        <begin position="216"/>
        <end position="225"/>
    </location>
</feature>
<feature type="strand" evidence="20">
    <location>
        <begin position="228"/>
        <end position="235"/>
    </location>
</feature>
<feature type="strand" evidence="20">
    <location>
        <begin position="239"/>
        <end position="250"/>
    </location>
</feature>
<feature type="strand" evidence="22">
    <location>
        <begin position="251"/>
        <end position="253"/>
    </location>
</feature>
<feature type="strand" evidence="21">
    <location>
        <begin position="254"/>
        <end position="256"/>
    </location>
</feature>
<feature type="strand" evidence="20">
    <location>
        <begin position="261"/>
        <end position="272"/>
    </location>
</feature>
<feature type="strand" evidence="20">
    <location>
        <begin position="276"/>
        <end position="281"/>
    </location>
</feature>
<feature type="strand" evidence="20">
    <location>
        <begin position="284"/>
        <end position="286"/>
    </location>
</feature>
<feature type="strand" evidence="20">
    <location>
        <begin position="291"/>
        <end position="296"/>
    </location>
</feature>
<feature type="helix" evidence="20">
    <location>
        <begin position="301"/>
        <end position="303"/>
    </location>
</feature>
<feature type="strand" evidence="20">
    <location>
        <begin position="305"/>
        <end position="312"/>
    </location>
</feature>
<feature type="strand" evidence="20">
    <location>
        <begin position="317"/>
        <end position="319"/>
    </location>
</feature>
<feature type="strand" evidence="20">
    <location>
        <begin position="323"/>
        <end position="327"/>
    </location>
</feature>
<feature type="strand" evidence="23">
    <location>
        <begin position="528"/>
        <end position="530"/>
    </location>
</feature>
<feature type="strand" evidence="23">
    <location>
        <begin position="543"/>
        <end position="545"/>
    </location>
</feature>
<feature type="strand" evidence="23">
    <location>
        <begin position="552"/>
        <end position="555"/>
    </location>
</feature>
<feature type="helix" evidence="23">
    <location>
        <begin position="563"/>
        <end position="565"/>
    </location>
</feature>
<feature type="strand" evidence="23">
    <location>
        <begin position="567"/>
        <end position="572"/>
    </location>
</feature>
<feature type="strand" evidence="23">
    <location>
        <begin position="585"/>
        <end position="587"/>
    </location>
</feature>
<feature type="strand" evidence="23">
    <location>
        <begin position="590"/>
        <end position="602"/>
    </location>
</feature>
<feature type="strand" evidence="23">
    <location>
        <begin position="604"/>
        <end position="607"/>
    </location>
</feature>
<feature type="strand" evidence="23">
    <location>
        <begin position="612"/>
        <end position="622"/>
    </location>
</feature>
<feature type="strand" evidence="23">
    <location>
        <begin position="625"/>
        <end position="630"/>
    </location>
</feature>
<feature type="strand" evidence="23">
    <location>
        <begin position="636"/>
        <end position="638"/>
    </location>
</feature>
<feature type="strand" evidence="23">
    <location>
        <begin position="641"/>
        <end position="646"/>
    </location>
</feature>
<feature type="helix" evidence="23">
    <location>
        <begin position="651"/>
        <end position="653"/>
    </location>
</feature>
<feature type="strand" evidence="23">
    <location>
        <begin position="655"/>
        <end position="662"/>
    </location>
</feature>
<feature type="strand" evidence="23">
    <location>
        <begin position="667"/>
        <end position="669"/>
    </location>
</feature>
<feature type="strand" evidence="23">
    <location>
        <begin position="673"/>
        <end position="678"/>
    </location>
</feature>
<sequence>MHLLGPWLLLLVLEYLAFSDSSKWVFEHPETLYAWEGACVWIPCTYRALDGDLESFILFHNPEYNKNTSKFDGTRLYESTKDGKVPSEQKRVQFLGDKNKNCTLSIHPVHLNDSGQLGLRMESKTEKWMERIHLNVSERPFPPHIQLPPEIQESQEVTLTCLLNFSCYGYPIQLQWLLEGVPMRQAAVTSTSLTIKSVFTRSELKFSPQWSHHGKIVTCQLQDADGKFLSNDTVQLNVKHTPKLEIKVTPSDAIVREGDSVTMTCEVSSSNPEYTTVSWLKDGTSLKKQNTFTLNLREVTKDQSGKYCCQVSNDVGPGRSEEVFLQVQYAPEPSTVQILHSPAVEGSQVEFLCMSLANPLPTNYTWYHNGKEMQGRTEEKVHIPKILPWHAGTYSCVAENILGTGQRGPGAELDVQYPPKKVTTVIQNPMPIREGDTVTLSCNYNSSNPSVTRYEWKPHGAWEEPSLGVLKIQNVGWDNTTIACAACNSWCSWASPVALNVQYAPRDVRVRKIKPLSEIHSGNSVSLQCDFSSSHPKEVQFFWEKNGRLLGKESQLNFDSISPEDAGSYSCWVNNSIGQTASKAWTLEVLYAPRRLRVSMSPGDQVMEGKSATLTCESDANPPVSHYTWFDWNNQSLPYHSQKLRLEPVKVQHSGAYWCQGTNSVGKGRSPLSTLTVYYSPETIGRRVAVGLGSCLAILILAICGLKLQRRWKRTQSQQGLQENSSGQSFFVRNKKVRRAPLSEGPHSLGCYNPMMEDGISYTTLRFPEMNIPRTGDAESSEMQRPPPDCDDTVTYSALHKRQVGDYENVIPDFPEDEGIHYSELIQFGVGERPQAQENVDYVILKH</sequence>
<dbReference type="EMBL" id="U62631">
    <property type="protein sequence ID" value="AAB06448.1"/>
    <property type="molecule type" value="Genomic_DNA"/>
</dbReference>
<dbReference type="EMBL" id="U62631">
    <property type="protein sequence ID" value="AAB06449.1"/>
    <property type="molecule type" value="Genomic_DNA"/>
</dbReference>
<dbReference type="EMBL" id="X59350">
    <property type="protein sequence ID" value="CAA42006.1"/>
    <property type="molecule type" value="mRNA"/>
</dbReference>
<dbReference type="EMBL" id="X52785">
    <property type="protein sequence ID" value="CAA36988.1"/>
    <property type="status" value="ALT_FRAME"/>
    <property type="molecule type" value="mRNA"/>
</dbReference>
<dbReference type="EMBL" id="AK225625">
    <property type="status" value="NOT_ANNOTATED_CDS"/>
    <property type="molecule type" value="mRNA"/>
</dbReference>
<dbReference type="EMBL" id="AC002132">
    <property type="status" value="NOT_ANNOTATED_CDS"/>
    <property type="molecule type" value="Genomic_DNA"/>
</dbReference>
<dbReference type="EMBL" id="BC109306">
    <property type="protein sequence ID" value="AAI09307.1"/>
    <property type="molecule type" value="mRNA"/>
</dbReference>
<dbReference type="EMBL" id="AB012995">
    <property type="protein sequence ID" value="BAA36564.1"/>
    <property type="molecule type" value="Genomic_DNA"/>
</dbReference>
<dbReference type="EMBL" id="AB012996">
    <property type="protein sequence ID" value="BAA36565.1"/>
    <property type="molecule type" value="Genomic_DNA"/>
</dbReference>
<dbReference type="EMBL" id="AB012997">
    <property type="protein sequence ID" value="BAA36566.1"/>
    <property type="molecule type" value="Genomic_DNA"/>
</dbReference>
<dbReference type="EMBL" id="AB012998">
    <property type="protein sequence ID" value="BAA36567.1"/>
    <property type="molecule type" value="Genomic_DNA"/>
</dbReference>
<dbReference type="EMBL" id="AB012999">
    <property type="protein sequence ID" value="BAA36568.1"/>
    <property type="molecule type" value="Genomic_DNA"/>
</dbReference>
<dbReference type="EMBL" id="AB013000">
    <property type="protein sequence ID" value="BAA36569.1"/>
    <property type="molecule type" value="Genomic_DNA"/>
</dbReference>
<dbReference type="EMBL" id="AB013002">
    <property type="protein sequence ID" value="BAA36571.1"/>
    <property type="molecule type" value="Genomic_DNA"/>
</dbReference>
<dbReference type="EMBL" id="AB013003">
    <property type="protein sequence ID" value="BAA36572.1"/>
    <property type="molecule type" value="Genomic_DNA"/>
</dbReference>
<dbReference type="EMBL" id="AB013004">
    <property type="protein sequence ID" value="BAA36573.1"/>
    <property type="molecule type" value="Genomic_DNA"/>
</dbReference>
<dbReference type="EMBL" id="AB013006">
    <property type="protein sequence ID" value="BAA36575.1"/>
    <property type="molecule type" value="Genomic_DNA"/>
</dbReference>
<dbReference type="CCDS" id="CCDS12457.1">
    <molecule id="P20273-1"/>
</dbReference>
<dbReference type="CCDS" id="CCDS54247.1">
    <molecule id="P20273-4"/>
</dbReference>
<dbReference type="CCDS" id="CCDS54248.1">
    <molecule id="P20273-3"/>
</dbReference>
<dbReference type="CCDS" id="CCDS54249.1">
    <molecule id="P20273-2"/>
</dbReference>
<dbReference type="CCDS" id="CCDS62634.1">
    <molecule id="P20273-5"/>
</dbReference>
<dbReference type="PIR" id="A35648">
    <property type="entry name" value="A35648"/>
</dbReference>
<dbReference type="RefSeq" id="NP_001172028.1">
    <molecule id="P20273-3"/>
    <property type="nucleotide sequence ID" value="NM_001185099.2"/>
</dbReference>
<dbReference type="RefSeq" id="NP_001172029.1">
    <molecule id="P20273-4"/>
    <property type="nucleotide sequence ID" value="NM_001185100.2"/>
</dbReference>
<dbReference type="RefSeq" id="NP_001172030.1">
    <molecule id="P20273-2"/>
    <property type="nucleotide sequence ID" value="NM_001185101.2"/>
</dbReference>
<dbReference type="RefSeq" id="NP_001265346.1">
    <molecule id="P20273-5"/>
    <property type="nucleotide sequence ID" value="NM_001278417.2"/>
</dbReference>
<dbReference type="RefSeq" id="NP_001762.2">
    <molecule id="P20273-1"/>
    <property type="nucleotide sequence ID" value="NM_001771.4"/>
</dbReference>
<dbReference type="PDB" id="5VKJ">
    <property type="method" value="X-ray"/>
    <property type="resolution" value="2.12 A"/>
    <property type="chains" value="A=20-330"/>
</dbReference>
<dbReference type="PDB" id="5VKM">
    <property type="method" value="X-ray"/>
    <property type="resolution" value="2.20 A"/>
    <property type="chains" value="A=20-330"/>
</dbReference>
<dbReference type="PDB" id="5VL3">
    <property type="method" value="X-ray"/>
    <property type="resolution" value="3.10 A"/>
    <property type="chains" value="Q/R/S/T=22-330"/>
</dbReference>
<dbReference type="PDB" id="7O52">
    <property type="method" value="X-ray"/>
    <property type="resolution" value="2.41 A"/>
    <property type="chains" value="U=504-687"/>
</dbReference>
<dbReference type="PDBsum" id="5VKJ"/>
<dbReference type="PDBsum" id="5VKM"/>
<dbReference type="PDBsum" id="5VL3"/>
<dbReference type="PDBsum" id="7O52"/>
<dbReference type="SASBDB" id="P20273"/>
<dbReference type="SMR" id="P20273"/>
<dbReference type="BioGRID" id="107371">
    <property type="interactions" value="39"/>
</dbReference>
<dbReference type="ELM" id="P20273"/>
<dbReference type="FunCoup" id="P20273">
    <property type="interactions" value="401"/>
</dbReference>
<dbReference type="IntAct" id="P20273">
    <property type="interactions" value="15"/>
</dbReference>
<dbReference type="MINT" id="P20273"/>
<dbReference type="STRING" id="9606.ENSP00000085219"/>
<dbReference type="BindingDB" id="P20273"/>
<dbReference type="ChEMBL" id="CHEMBL3218"/>
<dbReference type="DrugBank" id="DB04958">
    <property type="generic name" value="Epratuzumab"/>
</dbReference>
<dbReference type="DrugBank" id="DB05889">
    <property type="generic name" value="Inotuzumab ozogamicin"/>
</dbReference>
<dbReference type="DrugBank" id="DB12688">
    <property type="generic name" value="Moxetumomab pasudotox"/>
</dbReference>
<dbReference type="DrugCentral" id="P20273"/>
<dbReference type="GuidetoPHARMACOLOGY" id="2786"/>
<dbReference type="UniLectin" id="P20273"/>
<dbReference type="GlyCosmos" id="P20273">
    <property type="glycosylation" value="11 sites, No reported glycans"/>
</dbReference>
<dbReference type="GlyGen" id="P20273">
    <property type="glycosylation" value="19 sites, 1 N-linked glycan (1 site), 1 O-linked glycan (1 site)"/>
</dbReference>
<dbReference type="iPTMnet" id="P20273"/>
<dbReference type="PhosphoSitePlus" id="P20273"/>
<dbReference type="BioMuta" id="CD22"/>
<dbReference type="DMDM" id="6166019"/>
<dbReference type="jPOST" id="P20273"/>
<dbReference type="MassIVE" id="P20273"/>
<dbReference type="PaxDb" id="9606-ENSP00000085219"/>
<dbReference type="PeptideAtlas" id="P20273"/>
<dbReference type="ProteomicsDB" id="24846"/>
<dbReference type="ProteomicsDB" id="27594"/>
<dbReference type="ProteomicsDB" id="53740">
    <molecule id="P20273-1"/>
</dbReference>
<dbReference type="ProteomicsDB" id="53741">
    <molecule id="P20273-2"/>
</dbReference>
<dbReference type="ABCD" id="P20273">
    <property type="antibodies" value="34 sequenced antibodies"/>
</dbReference>
<dbReference type="Antibodypedia" id="3714">
    <property type="antibodies" value="2673 antibodies from 56 providers"/>
</dbReference>
<dbReference type="DNASU" id="933"/>
<dbReference type="Ensembl" id="ENST00000085219.10">
    <molecule id="P20273-1"/>
    <property type="protein sequence ID" value="ENSP00000085219.4"/>
    <property type="gene ID" value="ENSG00000012124.17"/>
</dbReference>
<dbReference type="Ensembl" id="ENST00000341773.10">
    <molecule id="P20273-2"/>
    <property type="protein sequence ID" value="ENSP00000339349.6"/>
    <property type="gene ID" value="ENSG00000012124.17"/>
</dbReference>
<dbReference type="Ensembl" id="ENST00000419549.6">
    <molecule id="P20273-5"/>
    <property type="protein sequence ID" value="ENSP00000403822.2"/>
    <property type="gene ID" value="ENSG00000012124.17"/>
</dbReference>
<dbReference type="Ensembl" id="ENST00000536635.6">
    <molecule id="P20273-3"/>
    <property type="protein sequence ID" value="ENSP00000442279.1"/>
    <property type="gene ID" value="ENSG00000012124.17"/>
</dbReference>
<dbReference type="Ensembl" id="ENST00000544992.6">
    <molecule id="P20273-4"/>
    <property type="protein sequence ID" value="ENSP00000441237.1"/>
    <property type="gene ID" value="ENSG00000012124.17"/>
</dbReference>
<dbReference type="Ensembl" id="ENST00000594250.5">
    <molecule id="P20273-2"/>
    <property type="protein sequence ID" value="ENSP00000469984.1"/>
    <property type="gene ID" value="ENSG00000012124.17"/>
</dbReference>
<dbReference type="GeneID" id="933"/>
<dbReference type="KEGG" id="hsa:933"/>
<dbReference type="MANE-Select" id="ENST00000085219.10">
    <property type="protein sequence ID" value="ENSP00000085219.4"/>
    <property type="RefSeq nucleotide sequence ID" value="NM_001771.4"/>
    <property type="RefSeq protein sequence ID" value="NP_001762.2"/>
</dbReference>
<dbReference type="UCSC" id="uc002nzb.6">
    <molecule id="P20273-1"/>
    <property type="organism name" value="human"/>
</dbReference>
<dbReference type="AGR" id="HGNC:1643"/>
<dbReference type="CTD" id="933"/>
<dbReference type="DisGeNET" id="933"/>
<dbReference type="GeneCards" id="CD22"/>
<dbReference type="HGNC" id="HGNC:1643">
    <property type="gene designation" value="CD22"/>
</dbReference>
<dbReference type="HPA" id="ENSG00000012124">
    <property type="expression patterns" value="Tissue enhanced (lymphoid tissue, ovary)"/>
</dbReference>
<dbReference type="MalaCards" id="CD22"/>
<dbReference type="MIM" id="107266">
    <property type="type" value="gene"/>
</dbReference>
<dbReference type="neXtProt" id="NX_P20273"/>
<dbReference type="OpenTargets" id="ENSG00000012124"/>
<dbReference type="PharmGKB" id="PA26201"/>
<dbReference type="VEuPathDB" id="HostDB:ENSG00000012124"/>
<dbReference type="eggNOG" id="KOG4475">
    <property type="taxonomic scope" value="Eukaryota"/>
</dbReference>
<dbReference type="GeneTree" id="ENSGT01120000271890"/>
<dbReference type="HOGENOM" id="CLU_017949_0_0_1"/>
<dbReference type="InParanoid" id="P20273"/>
<dbReference type="OMA" id="DWNNQDL"/>
<dbReference type="OrthoDB" id="10039395at2759"/>
<dbReference type="PAN-GO" id="P20273">
    <property type="GO annotations" value="10 GO annotations based on evolutionary models"/>
</dbReference>
<dbReference type="PhylomeDB" id="P20273"/>
<dbReference type="TreeFam" id="TF334827"/>
<dbReference type="PathwayCommons" id="P20273"/>
<dbReference type="Reactome" id="R-HSA-198933">
    <property type="pathway name" value="Immunoregulatory interactions between a Lymphoid and a non-Lymphoid cell"/>
</dbReference>
<dbReference type="Reactome" id="R-HSA-5690714">
    <property type="pathway name" value="CD22 mediated BCR regulation"/>
</dbReference>
<dbReference type="Reactome" id="R-HSA-983695">
    <property type="pathway name" value="Antigen activates B Cell Receptor (BCR) leading to generation of second messengers"/>
</dbReference>
<dbReference type="SignaLink" id="P20273"/>
<dbReference type="SIGNOR" id="P20273"/>
<dbReference type="BioGRID-ORCS" id="933">
    <property type="hits" value="19 hits in 1160 CRISPR screens"/>
</dbReference>
<dbReference type="ChiTaRS" id="CD22">
    <property type="organism name" value="human"/>
</dbReference>
<dbReference type="GeneWiki" id="CD22"/>
<dbReference type="GenomeRNAi" id="933"/>
<dbReference type="Pharos" id="P20273">
    <property type="development level" value="Tclin"/>
</dbReference>
<dbReference type="PRO" id="PR:P20273"/>
<dbReference type="Proteomes" id="UP000005640">
    <property type="component" value="Chromosome 19"/>
</dbReference>
<dbReference type="RNAct" id="P20273">
    <property type="molecule type" value="protein"/>
</dbReference>
<dbReference type="Bgee" id="ENSG00000012124">
    <property type="expression patterns" value="Expressed in spleen and 161 other cell types or tissues"/>
</dbReference>
<dbReference type="ExpressionAtlas" id="P20273">
    <property type="expression patterns" value="baseline and differential"/>
</dbReference>
<dbReference type="GO" id="GO:0009986">
    <property type="term" value="C:cell surface"/>
    <property type="evidence" value="ECO:0000250"/>
    <property type="project" value="ARUK-UCL"/>
</dbReference>
<dbReference type="GO" id="GO:0005737">
    <property type="term" value="C:cytoplasm"/>
    <property type="evidence" value="ECO:0000304"/>
    <property type="project" value="ARUK-UCL"/>
</dbReference>
<dbReference type="GO" id="GO:0005769">
    <property type="term" value="C:early endosome"/>
    <property type="evidence" value="ECO:0000314"/>
    <property type="project" value="ARUK-UCL"/>
</dbReference>
<dbReference type="GO" id="GO:0009897">
    <property type="term" value="C:external side of plasma membrane"/>
    <property type="evidence" value="ECO:0000318"/>
    <property type="project" value="GO_Central"/>
</dbReference>
<dbReference type="GO" id="GO:0070062">
    <property type="term" value="C:extracellular exosome"/>
    <property type="evidence" value="ECO:0007005"/>
    <property type="project" value="UniProtKB"/>
</dbReference>
<dbReference type="GO" id="GO:0016020">
    <property type="term" value="C:membrane"/>
    <property type="evidence" value="ECO:0000303"/>
    <property type="project" value="ARUK-UCL"/>
</dbReference>
<dbReference type="GO" id="GO:0032809">
    <property type="term" value="C:neuronal cell body membrane"/>
    <property type="evidence" value="ECO:0000250"/>
    <property type="project" value="ARUK-UCL"/>
</dbReference>
<dbReference type="GO" id="GO:0005886">
    <property type="term" value="C:plasma membrane"/>
    <property type="evidence" value="ECO:0000304"/>
    <property type="project" value="ARUK-UCL"/>
</dbReference>
<dbReference type="GO" id="GO:0055037">
    <property type="term" value="C:recycling endosome"/>
    <property type="evidence" value="ECO:0000314"/>
    <property type="project" value="ARUK-UCL"/>
</dbReference>
<dbReference type="GO" id="GO:0030246">
    <property type="term" value="F:carbohydrate binding"/>
    <property type="evidence" value="ECO:0007669"/>
    <property type="project" value="UniProtKB-KW"/>
</dbReference>
<dbReference type="GO" id="GO:0042609">
    <property type="term" value="F:CD4 receptor binding"/>
    <property type="evidence" value="ECO:0000250"/>
    <property type="project" value="ARUK-UCL"/>
</dbReference>
<dbReference type="GO" id="GO:0001791">
    <property type="term" value="F:IgM binding"/>
    <property type="evidence" value="ECO:0000304"/>
    <property type="project" value="ARUK-UCL"/>
</dbReference>
<dbReference type="GO" id="GO:0019903">
    <property type="term" value="F:protein phosphatase binding"/>
    <property type="evidence" value="ECO:0000250"/>
    <property type="project" value="ARUK-UCL"/>
</dbReference>
<dbReference type="GO" id="GO:0033691">
    <property type="term" value="F:sialic acid binding"/>
    <property type="evidence" value="ECO:0000250"/>
    <property type="project" value="ARUK-UCL"/>
</dbReference>
<dbReference type="GO" id="GO:0005102">
    <property type="term" value="F:signaling receptor binding"/>
    <property type="evidence" value="ECO:0000304"/>
    <property type="project" value="ARUK-UCL"/>
</dbReference>
<dbReference type="GO" id="GO:0042113">
    <property type="term" value="P:B cell activation"/>
    <property type="evidence" value="ECO:0000314"/>
    <property type="project" value="ARUK-UCL"/>
</dbReference>
<dbReference type="GO" id="GO:0007155">
    <property type="term" value="P:cell adhesion"/>
    <property type="evidence" value="ECO:0000303"/>
    <property type="project" value="ProtInc"/>
</dbReference>
<dbReference type="GO" id="GO:0050859">
    <property type="term" value="P:negative regulation of B cell receptor signaling pathway"/>
    <property type="evidence" value="ECO:0000314"/>
    <property type="project" value="ARUK-UCL"/>
</dbReference>
<dbReference type="GO" id="GO:0050849">
    <property type="term" value="P:negative regulation of calcium-mediated signaling"/>
    <property type="evidence" value="ECO:0000250"/>
    <property type="project" value="ARUK-UCL"/>
</dbReference>
<dbReference type="GO" id="GO:0002638">
    <property type="term" value="P:negative regulation of immunoglobulin production"/>
    <property type="evidence" value="ECO:0000250"/>
    <property type="project" value="ARUK-UCL"/>
</dbReference>
<dbReference type="GO" id="GO:0030888">
    <property type="term" value="P:regulation of B cell proliferation"/>
    <property type="evidence" value="ECO:0000250"/>
    <property type="project" value="ARUK-UCL"/>
</dbReference>
<dbReference type="GO" id="GO:0030100">
    <property type="term" value="P:regulation of endocytosis"/>
    <property type="evidence" value="ECO:0000314"/>
    <property type="project" value="ARUK-UCL"/>
</dbReference>
<dbReference type="GO" id="GO:0050776">
    <property type="term" value="P:regulation of immune response"/>
    <property type="evidence" value="ECO:0000250"/>
    <property type="project" value="ARUK-UCL"/>
</dbReference>
<dbReference type="CDD" id="cd20938">
    <property type="entry name" value="IgC1_CD22_d2"/>
    <property type="match status" value="1"/>
</dbReference>
<dbReference type="CDD" id="cd20937">
    <property type="entry name" value="IgC2_CD22_d3"/>
    <property type="match status" value="1"/>
</dbReference>
<dbReference type="CDD" id="cd20929">
    <property type="entry name" value="IgV_CD22_d1"/>
    <property type="match status" value="1"/>
</dbReference>
<dbReference type="FunFam" id="2.60.40.10:FF:001199">
    <property type="entry name" value="B-cell receptor CD22"/>
    <property type="match status" value="1"/>
</dbReference>
<dbReference type="FunFam" id="2.60.40.10:FF:001605">
    <property type="entry name" value="B-cell receptor CD22"/>
    <property type="match status" value="2"/>
</dbReference>
<dbReference type="FunFam" id="2.60.40.10:FF:002011">
    <property type="entry name" value="B-cell receptor CD22"/>
    <property type="match status" value="1"/>
</dbReference>
<dbReference type="FunFam" id="2.60.40.10:FF:002030">
    <property type="entry name" value="B-cell receptor CD22"/>
    <property type="match status" value="1"/>
</dbReference>
<dbReference type="FunFam" id="2.60.40.10:FF:002336">
    <property type="entry name" value="B-cell receptor CD22"/>
    <property type="match status" value="1"/>
</dbReference>
<dbReference type="Gene3D" id="2.60.40.10">
    <property type="entry name" value="Immunoglobulins"/>
    <property type="match status" value="7"/>
</dbReference>
<dbReference type="InterPro" id="IPR013162">
    <property type="entry name" value="CD80_C2-set"/>
</dbReference>
<dbReference type="InterPro" id="IPR007110">
    <property type="entry name" value="Ig-like_dom"/>
</dbReference>
<dbReference type="InterPro" id="IPR036179">
    <property type="entry name" value="Ig-like_dom_sf"/>
</dbReference>
<dbReference type="InterPro" id="IPR013783">
    <property type="entry name" value="Ig-like_fold"/>
</dbReference>
<dbReference type="InterPro" id="IPR056386">
    <property type="entry name" value="Ig_CD22"/>
</dbReference>
<dbReference type="InterPro" id="IPR003599">
    <property type="entry name" value="Ig_sub"/>
</dbReference>
<dbReference type="InterPro" id="IPR003598">
    <property type="entry name" value="Ig_sub2"/>
</dbReference>
<dbReference type="PANTHER" id="PTHR46958">
    <property type="entry name" value="B-CELL RECEPTOR CD22"/>
    <property type="match status" value="1"/>
</dbReference>
<dbReference type="PANTHER" id="PTHR46958:SF1">
    <property type="entry name" value="B-CELL RECEPTOR CD22"/>
    <property type="match status" value="1"/>
</dbReference>
<dbReference type="Pfam" id="PF08205">
    <property type="entry name" value="C2-set_2"/>
    <property type="match status" value="1"/>
</dbReference>
<dbReference type="Pfam" id="PF13895">
    <property type="entry name" value="Ig_2"/>
    <property type="match status" value="1"/>
</dbReference>
<dbReference type="Pfam" id="PF13927">
    <property type="entry name" value="Ig_3"/>
    <property type="match status" value="3"/>
</dbReference>
<dbReference type="Pfam" id="PF24518">
    <property type="entry name" value="Ig_CD22"/>
    <property type="match status" value="1"/>
</dbReference>
<dbReference type="SMART" id="SM00409">
    <property type="entry name" value="IG"/>
    <property type="match status" value="7"/>
</dbReference>
<dbReference type="SMART" id="SM00408">
    <property type="entry name" value="IGc2"/>
    <property type="match status" value="4"/>
</dbReference>
<dbReference type="SUPFAM" id="SSF48726">
    <property type="entry name" value="Immunoglobulin"/>
    <property type="match status" value="7"/>
</dbReference>
<dbReference type="PROSITE" id="PS50835">
    <property type="entry name" value="IG_LIKE"/>
    <property type="match status" value="6"/>
</dbReference>
<reference key="1">
    <citation type="journal article" date="1990" name="Nature">
        <title>The B-cell antigen CD22 mediates monocyte and erythrocyte adhesion.</title>
        <authorList>
            <person name="Stamenkovic I."/>
            <person name="Seed B."/>
        </authorList>
    </citation>
    <scope>NUCLEOTIDE SEQUENCE [MRNA] (ISOFORM CD22-BETA)</scope>
</reference>
<reference key="2">
    <citation type="journal article" date="1991" name="J. Exp. Med.">
        <title>cDNA cloning of the B cell membrane protein CD22: a mediator of B-B cell interactions.</title>
        <authorList>
            <person name="Wilson G.L."/>
            <person name="Fox C.H."/>
            <person name="Fauci A.S."/>
            <person name="Kehrl J.H."/>
        </authorList>
    </citation>
    <scope>NUCLEOTIDE SEQUENCE [MRNA] (ISOFORM CD22-BETA)</scope>
    <scope>VARIANT HIS-639</scope>
    <source>
        <tissue>Tonsil</tissue>
    </source>
</reference>
<reference key="3">
    <citation type="journal article" date="1993" name="J. Immunol.">
        <title>Genomic structure and chromosomal mapping of the human CD22 gene.</title>
        <authorList>
            <person name="Wilson G.L."/>
            <person name="Najfeld V."/>
            <person name="Kozlow E."/>
            <person name="Menniger J."/>
            <person name="Ward D."/>
            <person name="Kehrl J.H."/>
        </authorList>
    </citation>
    <scope>NUCLEOTIDE SEQUENCE [GENOMIC DNA] (ISOFORMS CD22-ALPHA AND CD22-BETA)</scope>
</reference>
<reference key="4">
    <citation type="submission" date="2006-07" db="EMBL/GenBank/DDBJ databases">
        <authorList>
            <person name="Suzuki Y."/>
            <person name="Sugano S."/>
            <person name="Totoki Y."/>
            <person name="Toyoda A."/>
            <person name="Takeda T."/>
            <person name="Sakaki Y."/>
            <person name="Tanaka A."/>
            <person name="Yokoyama S."/>
        </authorList>
    </citation>
    <scope>NUCLEOTIDE SEQUENCE [LARGE SCALE MRNA] (ISOFORM 3)</scope>
    <source>
        <tissue>Spleen</tissue>
    </source>
</reference>
<reference key="5">
    <citation type="journal article" date="2004" name="Nature">
        <title>The DNA sequence and biology of human chromosome 19.</title>
        <authorList>
            <person name="Grimwood J."/>
            <person name="Gordon L.A."/>
            <person name="Olsen A.S."/>
            <person name="Terry A."/>
            <person name="Schmutz J."/>
            <person name="Lamerdin J.E."/>
            <person name="Hellsten U."/>
            <person name="Goodstein D."/>
            <person name="Couronne O."/>
            <person name="Tran-Gyamfi M."/>
            <person name="Aerts A."/>
            <person name="Altherr M."/>
            <person name="Ashworth L."/>
            <person name="Bajorek E."/>
            <person name="Black S."/>
            <person name="Branscomb E."/>
            <person name="Caenepeel S."/>
            <person name="Carrano A.V."/>
            <person name="Caoile C."/>
            <person name="Chan Y.M."/>
            <person name="Christensen M."/>
            <person name="Cleland C.A."/>
            <person name="Copeland A."/>
            <person name="Dalin E."/>
            <person name="Dehal P."/>
            <person name="Denys M."/>
            <person name="Detter J.C."/>
            <person name="Escobar J."/>
            <person name="Flowers D."/>
            <person name="Fotopulos D."/>
            <person name="Garcia C."/>
            <person name="Georgescu A.M."/>
            <person name="Glavina T."/>
            <person name="Gomez M."/>
            <person name="Gonzales E."/>
            <person name="Groza M."/>
            <person name="Hammon N."/>
            <person name="Hawkins T."/>
            <person name="Haydu L."/>
            <person name="Ho I."/>
            <person name="Huang W."/>
            <person name="Israni S."/>
            <person name="Jett J."/>
            <person name="Kadner K."/>
            <person name="Kimball H."/>
            <person name="Kobayashi A."/>
            <person name="Larionov V."/>
            <person name="Leem S.-H."/>
            <person name="Lopez F."/>
            <person name="Lou Y."/>
            <person name="Lowry S."/>
            <person name="Malfatti S."/>
            <person name="Martinez D."/>
            <person name="McCready P.M."/>
            <person name="Medina C."/>
            <person name="Morgan J."/>
            <person name="Nelson K."/>
            <person name="Nolan M."/>
            <person name="Ovcharenko I."/>
            <person name="Pitluck S."/>
            <person name="Pollard M."/>
            <person name="Popkie A.P."/>
            <person name="Predki P."/>
            <person name="Quan G."/>
            <person name="Ramirez L."/>
            <person name="Rash S."/>
            <person name="Retterer J."/>
            <person name="Rodriguez A."/>
            <person name="Rogers S."/>
            <person name="Salamov A."/>
            <person name="Salazar A."/>
            <person name="She X."/>
            <person name="Smith D."/>
            <person name="Slezak T."/>
            <person name="Solovyev V."/>
            <person name="Thayer N."/>
            <person name="Tice H."/>
            <person name="Tsai M."/>
            <person name="Ustaszewska A."/>
            <person name="Vo N."/>
            <person name="Wagner M."/>
            <person name="Wheeler J."/>
            <person name="Wu K."/>
            <person name="Xie G."/>
            <person name="Yang J."/>
            <person name="Dubchak I."/>
            <person name="Furey T.S."/>
            <person name="DeJong P."/>
            <person name="Dickson M."/>
            <person name="Gordon D."/>
            <person name="Eichler E.E."/>
            <person name="Pennacchio L.A."/>
            <person name="Richardson P."/>
            <person name="Stubbs L."/>
            <person name="Rokhsar D.S."/>
            <person name="Myers R.M."/>
            <person name="Rubin E.M."/>
            <person name="Lucas S.M."/>
        </authorList>
    </citation>
    <scope>NUCLEOTIDE SEQUENCE [LARGE SCALE GENOMIC DNA]</scope>
</reference>
<reference key="6">
    <citation type="journal article" date="2004" name="Genome Res.">
        <title>The status, quality, and expansion of the NIH full-length cDNA project: the Mammalian Gene Collection (MGC).</title>
        <authorList>
            <consortium name="The MGC Project Team"/>
        </authorList>
    </citation>
    <scope>NUCLEOTIDE SEQUENCE [LARGE SCALE MRNA] (ISOFORM 5)</scope>
</reference>
<reference key="7">
    <citation type="journal article" date="1999" name="Immunogenetics">
        <title>Identification of the gene variations in human CD22.</title>
        <authorList>
            <person name="Hatta Y."/>
            <person name="Tsuchiya N."/>
            <person name="Matsushita M."/>
            <person name="Shiota M."/>
            <person name="Hagiwara K."/>
            <person name="Tokunaga K."/>
        </authorList>
    </citation>
    <scope>NUCLEOTIDE SEQUENCE [GENOMIC DNA] OF 13-137; 139-239; 241-328 AND 418-502</scope>
    <scope>VARIANTS THR-34; GLU-152; LYS-203; GLY-664; CYS-669 AND ASP-745</scope>
</reference>
<reference key="8">
    <citation type="journal article" date="1993" name="J. Biol. Chem.">
        <title>Natural ligands of the B cell adhesion molecule CD22 beta carry N-linked oligosaccharides with alpha-2,6-linked sialic acids that are required for recognition.</title>
        <authorList>
            <person name="Powell L.D."/>
            <person name="Sgroi D."/>
            <person name="Sjoberg E.R."/>
            <person name="Stamenkovic I."/>
            <person name="Varki A."/>
        </authorList>
    </citation>
    <scope>SIALIC ACID-BINDING</scope>
</reference>
<reference key="9">
    <citation type="journal article" date="1995" name="Science">
        <title>A role in B cell activation for CD22 and the protein tyrosine phosphatase SHP.</title>
        <authorList>
            <person name="Doody G.M."/>
            <person name="Justement L.B."/>
            <person name="Delibrias C.C."/>
            <person name="Matthews R.J."/>
            <person name="Lin J."/>
            <person name="Thomas M.L."/>
            <person name="Fearon D.T."/>
        </authorList>
    </citation>
    <scope>INTERACTION WITH PTPN6</scope>
</reference>
<reference key="10">
    <citation type="journal article" date="1996" name="Eur. J. Immunol.">
        <title>Involvement of p72syk kinase, p53/56lyn kinase and phosphatidyl inositol-3 kinase in signal transduction via the human B lymphocyte antigen CD22.</title>
        <authorList>
            <person name="Tuscano J.M."/>
            <person name="Engel P."/>
            <person name="Tedder T.F."/>
            <person name="Agarwal A."/>
            <person name="Kehrl J.H."/>
        </authorList>
    </citation>
    <scope>INTERACTION WITH LYN; SYK AND PIK3R1/PIK3R2</scope>
</reference>
<reference key="11">
    <citation type="journal article" date="1996" name="J. Exp. Med.">
        <title>CD22 associates with protein tyrosine phosphatase 1C, Syk, and phospholipase C-gamma(1) upon B cell activation.</title>
        <authorList>
            <person name="Law C.L."/>
            <person name="Sidorenko S.P."/>
            <person name="Chandran K.A."/>
            <person name="Zhao Z."/>
            <person name="Shen S.H."/>
            <person name="Fischer E.H."/>
            <person name="Clark E.A."/>
        </authorList>
    </citation>
    <scope>INTERACTION WITH PTPN6; SYK AND PLCG1</scope>
    <scope>FUNCTION</scope>
</reference>
<reference key="12">
    <citation type="journal article" date="1997" name="Annu. Rev. Immunol.">
        <title>CD22, a B lymphocyte-specific adhesion molecule that regulates antigen receptor signaling.</title>
        <authorList>
            <person name="Tedder T.F."/>
            <person name="Tuscano J."/>
            <person name="Sato S."/>
            <person name="Kehrl J.H."/>
        </authorList>
    </citation>
    <scope>REVIEW</scope>
</reference>
<reference key="13">
    <citation type="journal article" date="2010" name="Mol. Cell. Proteomics">
        <title>In situ trans ligands of CD22 identified by glycan-protein photocross-linking-enabled proteomics.</title>
        <authorList>
            <person name="Ramya T.N."/>
            <person name="Weerapana E."/>
            <person name="Liao L."/>
            <person name="Zeng Y."/>
            <person name="Tateno H."/>
            <person name="Liao L."/>
            <person name="Yates J.R. III"/>
            <person name="Cravatt B.F."/>
            <person name="Paulson J.C."/>
        </authorList>
    </citation>
    <scope>FUNCTION</scope>
    <scope>SUBCELLULAR LOCATION</scope>
</reference>
<reference key="14">
    <citation type="journal article" date="2010" name="Blood">
        <title>IVIg modulates BCR signaling through CD22 and promotes apoptosis in mature human B lymphocytes.</title>
        <authorList>
            <person name="Seite J.F."/>
            <person name="Cornec D."/>
            <person name="Renaudineau Y."/>
            <person name="Youinou P."/>
            <person name="Mageed R.A."/>
            <person name="Hillion S."/>
        </authorList>
    </citation>
    <scope>FUNCTION</scope>
</reference>
<reference key="15">
    <citation type="journal article" date="2021" name="J. Immunol.">
        <title>CD22 Controls Germinal Center B Cell Receptor Signaling, Which Influences Plasma Cell and Memory B Cell Output.</title>
        <authorList>
            <person name="Meyer S.J."/>
            <person name="Steffensen M."/>
            <person name="Acs A."/>
            <person name="Weisenburger T."/>
            <person name="Wadewitz C."/>
            <person name="Winkler T.H."/>
            <person name="Nitschke L."/>
        </authorList>
    </citation>
    <scope>FUNCTION</scope>
</reference>
<reference evidence="19" key="16">
    <citation type="journal article" date="2021" name="J. Biol. Chem.">
        <title>Structural details of monoclonal antibody m971 recognition of the membrane-proximal domain of CD22.</title>
        <authorList>
            <person name="Ereno-Orbea J."/>
            <person name="Liu X."/>
            <person name="Sicard T."/>
            <person name="Kucharska I."/>
            <person name="Li W."/>
            <person name="Borovsky D."/>
            <person name="Cui H."/>
            <person name="Feng Y."/>
            <person name="Dimitrov D.S."/>
            <person name="Julien J.P."/>
        </authorList>
    </citation>
    <scope>X-RAY CRYSTALLOGRAPHY (2.41 ANGSTROMS) OF 504-687</scope>
    <scope>GLYCOSYLATION AT ASN-634</scope>
    <scope>MUTAGENESIS OF ASN-634</scope>
</reference>
<protein>
    <recommendedName>
        <fullName evidence="17">B-cell receptor CD22</fullName>
    </recommendedName>
    <alternativeName>
        <fullName>B-lymphocyte cell adhesion molecule</fullName>
        <shortName>BL-CAM</shortName>
    </alternativeName>
    <alternativeName>
        <fullName>Sialic acid-binding Ig-like lectin 2</fullName>
        <shortName>Siglec-2</shortName>
    </alternativeName>
    <alternativeName>
        <fullName>T-cell surface antigen Leu-14</fullName>
    </alternativeName>
    <cdAntigenName>CD22</cdAntigenName>
</protein>
<name>CD22_HUMAN</name>
<evidence type="ECO:0000250" key="1"/>
<evidence type="ECO:0000250" key="2">
    <source>
        <dbReference type="UniProtKB" id="P35329"/>
    </source>
</evidence>
<evidence type="ECO:0000255" key="3"/>
<evidence type="ECO:0000255" key="4">
    <source>
        <dbReference type="PROSITE-ProRule" id="PRU00114"/>
    </source>
</evidence>
<evidence type="ECO:0000269" key="5">
    <source>
    </source>
</evidence>
<evidence type="ECO:0000269" key="6">
    <source>
    </source>
</evidence>
<evidence type="ECO:0000269" key="7">
    <source>
    </source>
</evidence>
<evidence type="ECO:0000269" key="8">
    <source>
    </source>
</evidence>
<evidence type="ECO:0000269" key="9">
    <source>
    </source>
</evidence>
<evidence type="ECO:0000269" key="10">
    <source>
    </source>
</evidence>
<evidence type="ECO:0000269" key="11">
    <source>
    </source>
</evidence>
<evidence type="ECO:0000269" key="12">
    <source>
    </source>
</evidence>
<evidence type="ECO:0000269" key="13">
    <source>
    </source>
</evidence>
<evidence type="ECO:0000303" key="14">
    <source>
    </source>
</evidence>
<evidence type="ECO:0000303" key="15">
    <source>
    </source>
</evidence>
<evidence type="ECO:0000303" key="16">
    <source ref="4"/>
</evidence>
<evidence type="ECO:0000305" key="17"/>
<evidence type="ECO:0000312" key="18">
    <source>
        <dbReference type="HGNC" id="HGNC:1643"/>
    </source>
</evidence>
<evidence type="ECO:0007744" key="19">
    <source>
        <dbReference type="PDB" id="7O52"/>
    </source>
</evidence>
<evidence type="ECO:0007829" key="20">
    <source>
        <dbReference type="PDB" id="5VKJ"/>
    </source>
</evidence>
<evidence type="ECO:0007829" key="21">
    <source>
        <dbReference type="PDB" id="5VKM"/>
    </source>
</evidence>
<evidence type="ECO:0007829" key="22">
    <source>
        <dbReference type="PDB" id="5VL3"/>
    </source>
</evidence>
<evidence type="ECO:0007829" key="23">
    <source>
        <dbReference type="PDB" id="7O52"/>
    </source>
</evidence>
<proteinExistence type="evidence at protein level"/>
<comment type="function">
    <text evidence="7 8 10 12">Most highly expressed siglec (sialic acid-binding immunoglobulin-like lectin) on B-cells that plays a role in various aspects of B-cell biology including differentiation, antigen presentation, and trafficking to bone marrow (PubMed:34330755, PubMed:8627166). Binds to alpha 2,6-linked sialic acid residues of surface molecules such as CD22 itself, CD45 and IgM in a cis configuration. Can also bind to ligands on other cells as an adhesion molecule in a trans configuration (PubMed:20172905). Acts as an inhibitory coreceptor on the surface of B-cells and inhibits B-cell receptor induced signaling, characterized by inhibition of the calcium mobilization and cellular activation. Mechanistically, the immunoreceptor tyrosine-based inhibitory motif domain is phosphorylated by the Src kinase LYN, which in turn leads to the recruitment of the protein tyrosine phosphatase 1/PTPN6, leading to the negative regulation of BCR signaling (PubMed:8627166). If this negative signaling from is of sufficient strength, apoptosis of the B-cell can be induced (PubMed:20516366).</text>
</comment>
<comment type="subunit">
    <text evidence="2 11 12 13">Predominantly monomer of isoform CD22-beta. Also found as heterodimer of isoform CD22-beta and a shorter isoform. Interacts with PTPN6/SHP-1, LYN, SYK, PIK3R1/PIK3R2 and PLCG1 upon phosphorylation. Interacts with GRB2, INPP5D and SHC1 upon phosphorylation (By similarity). May form a complex with INPP5D/SHIP, GRB2 and SHC1.</text>
</comment>
<comment type="interaction">
    <interactant intactId="EBI-78277">
        <id>P20273</id>
    </interactant>
    <interactant intactId="EBI-79452">
        <id>P07948</id>
        <label>LYN</label>
    </interactant>
    <organismsDiffer>false</organismsDiffer>
    <experiments>2</experiments>
</comment>
<comment type="interaction">
    <interactant intactId="EBI-78277">
        <id>P20273</id>
    </interactant>
    <interactant intactId="EBI-79387">
        <id>P19174</id>
        <label>PLCG1</label>
    </interactant>
    <organismsDiffer>false</organismsDiffer>
    <experiments>2</experiments>
</comment>
<comment type="interaction">
    <interactant intactId="EBI-78277">
        <id>P20273</id>
    </interactant>
    <interactant intactId="EBI-78260">
        <id>P29350</id>
        <label>PTPN6</label>
    </interactant>
    <organismsDiffer>false</organismsDiffer>
    <experiments>4</experiments>
</comment>
<comment type="interaction">
    <interactant intactId="EBI-78277">
        <id>P20273</id>
    </interactant>
    <interactant intactId="EBI-78302">
        <id>P43405</id>
        <label>SYK</label>
    </interactant>
    <organismsDiffer>false</organismsDiffer>
    <experiments>4</experiments>
</comment>
<comment type="interaction">
    <interactant intactId="EBI-13320645">
        <id>P20273-5</id>
    </interactant>
    <interactant intactId="EBI-12109402">
        <id>Q86W74-2</id>
        <label>ANKRD46</label>
    </interactant>
    <organismsDiffer>false</organismsDiffer>
    <experiments>3</experiments>
</comment>
<comment type="interaction">
    <interactant intactId="EBI-13320645">
        <id>P20273-5</id>
    </interactant>
    <interactant intactId="EBI-741158">
        <id>Q96HA8</id>
        <label>NTAQ1</label>
    </interactant>
    <organismsDiffer>false</organismsDiffer>
    <experiments>3</experiments>
</comment>
<comment type="interaction">
    <interactant intactId="EBI-13320645">
        <id>P20273-5</id>
    </interactant>
    <interactant intactId="EBI-2844246">
        <id>Q9NV12</id>
        <label>TMEM140</label>
    </interactant>
    <organismsDiffer>false</organismsDiffer>
    <experiments>3</experiments>
</comment>
<comment type="subcellular location">
    <subcellularLocation>
        <location evidence="7">Cell membrane</location>
        <topology>Single-pass type I membrane protein</topology>
    </subcellularLocation>
</comment>
<comment type="alternative products">
    <event type="alternative splicing"/>
    <isoform>
        <id>P20273-1</id>
        <name>CD22-beta</name>
        <sequence type="displayed"/>
    </isoform>
    <isoform>
        <id>P20273-2</id>
        <name>CD22-alpha</name>
        <sequence type="described" ref="VSP_002531"/>
    </isoform>
    <isoform>
        <id>P20273-3</id>
        <name>3</name>
        <sequence type="described" ref="VSP_045363"/>
    </isoform>
    <isoform>
        <id>P20273-4</id>
        <name>4</name>
        <sequence type="described" ref="VSP_047223 VSP_047224"/>
    </isoform>
    <isoform>
        <id>P20273-5</id>
        <name>5</name>
        <sequence type="described" ref="VSP_054619 VSP_054620"/>
    </isoform>
    <text>Additional isoforms seem to exist.</text>
</comment>
<comment type="tissue specificity">
    <text>B-lymphocytes.</text>
</comment>
<comment type="domain">
    <text>Contains 4 copies of a cytoplasmic motif that is referred to as the immunoreceptor tyrosine-based inhibitor motif (ITIM). This motif is involved in modulation of cellular responses. The phosphorylated ITIM motif can bind the SH2 domain of several SH2-containing phosphatases.</text>
</comment>
<comment type="PTM">
    <text evidence="2">Phosphorylation of Tyr-762, Tyr-807 and Tyr-822 are involved in binding to SYK, GRB2 and SYK, respectively. Phosphorylation of Tyr-842 is involved in binding to SYK, PLCG2 and PIK3R1/PIK3R2.</text>
</comment>
<comment type="PTM">
    <text evidence="2">Phosphorylated on tyrosine residues by LYN.</text>
</comment>
<comment type="similarity">
    <text evidence="17">Belongs to the immunoglobulin superfamily. SIGLEC (sialic acid binding Ig-like lectin) family.</text>
</comment>
<comment type="sequence caution" evidence="17">
    <conflict type="frameshift">
        <sequence resource="EMBL-CDS" id="CAA36988"/>
    </conflict>
</comment>
<comment type="online information" name="Functional Glycomics Gateway - Glycan Binding">
    <link uri="http://www.functionalglycomics.org/glycomics/GBPServlet?&amp;operationType=view&amp;cbpId=cbp_hum_Itlect_00001"/>
    <text>Siglec-2 [3 Fc Domains]</text>
</comment>
<comment type="online information" name="Functional Glycomics Gateway - Glycan Binding">
    <link uri="http://www.functionalglycomics.org/glycomics/GBPServlet?&amp;operationType=view&amp;cbpId=cbp_hum_Itlect_269"/>
    <text>Siglec-2</text>
</comment>
<organism>
    <name type="scientific">Homo sapiens</name>
    <name type="common">Human</name>
    <dbReference type="NCBI Taxonomy" id="9606"/>
    <lineage>
        <taxon>Eukaryota</taxon>
        <taxon>Metazoa</taxon>
        <taxon>Chordata</taxon>
        <taxon>Craniata</taxon>
        <taxon>Vertebrata</taxon>
        <taxon>Euteleostomi</taxon>
        <taxon>Mammalia</taxon>
        <taxon>Eutheria</taxon>
        <taxon>Euarchontoglires</taxon>
        <taxon>Primates</taxon>
        <taxon>Haplorrhini</taxon>
        <taxon>Catarrhini</taxon>
        <taxon>Hominidae</taxon>
        <taxon>Homo</taxon>
    </lineage>
</organism>
<accession>P20273</accession>
<accession>F5GYU4</accession>
<accession>F5H7U3</accession>
<accession>O95699</accession>
<accession>O95701</accession>
<accession>O95702</accession>
<accession>O95703</accession>
<accession>Q01665</accession>
<accession>Q32M46</accession>
<accession>Q92872</accession>
<accession>Q92873</accession>
<accession>Q9UQA6</accession>
<accession>Q9UQA7</accession>
<accession>Q9UQA8</accession>
<accession>Q9UQA9</accession>
<accession>Q9UQB0</accession>
<accession>Q9Y2A6</accession>